<gene>
    <name type="ordered locus">SaurJH9_1967</name>
</gene>
<dbReference type="EMBL" id="CP000703">
    <property type="protein sequence ID" value="ABQ49752.1"/>
    <property type="molecule type" value="Genomic_DNA"/>
</dbReference>
<dbReference type="RefSeq" id="WP_000011542.1">
    <property type="nucleotide sequence ID" value="NC_009487.1"/>
</dbReference>
<dbReference type="SMR" id="A5IU79"/>
<dbReference type="KEGG" id="saj:SaurJH9_1967"/>
<dbReference type="HOGENOM" id="CLU_106166_1_0_9"/>
<dbReference type="GO" id="GO:0005886">
    <property type="term" value="C:plasma membrane"/>
    <property type="evidence" value="ECO:0007669"/>
    <property type="project" value="UniProtKB-SubCell"/>
</dbReference>
<dbReference type="CDD" id="cd16381">
    <property type="entry name" value="YitT_C_like_1"/>
    <property type="match status" value="1"/>
</dbReference>
<dbReference type="HAMAP" id="MF_01515">
    <property type="entry name" value="UPF0316"/>
    <property type="match status" value="1"/>
</dbReference>
<dbReference type="InterPro" id="IPR019264">
    <property type="entry name" value="DUF2179"/>
</dbReference>
<dbReference type="InterPro" id="IPR044035">
    <property type="entry name" value="DUF5698"/>
</dbReference>
<dbReference type="InterPro" id="IPR022930">
    <property type="entry name" value="UPF0316"/>
</dbReference>
<dbReference type="NCBIfam" id="NF003190">
    <property type="entry name" value="PRK04164.1-1"/>
    <property type="match status" value="1"/>
</dbReference>
<dbReference type="NCBIfam" id="NF003194">
    <property type="entry name" value="PRK04164.1-5"/>
    <property type="match status" value="1"/>
</dbReference>
<dbReference type="PANTHER" id="PTHR40060">
    <property type="entry name" value="UPF0316 PROTEIN YEBE"/>
    <property type="match status" value="1"/>
</dbReference>
<dbReference type="PANTHER" id="PTHR40060:SF1">
    <property type="entry name" value="UPF0316 PROTEIN YEBE"/>
    <property type="match status" value="1"/>
</dbReference>
<dbReference type="Pfam" id="PF10035">
    <property type="entry name" value="DUF2179"/>
    <property type="match status" value="1"/>
</dbReference>
<dbReference type="Pfam" id="PF18955">
    <property type="entry name" value="DUF5698"/>
    <property type="match status" value="1"/>
</dbReference>
<feature type="chain" id="PRO_1000087532" description="UPF0316 protein SaurJH9_1967">
    <location>
        <begin position="1"/>
        <end position="200"/>
    </location>
</feature>
<feature type="transmembrane region" description="Helical" evidence="1">
    <location>
        <begin position="8"/>
        <end position="28"/>
    </location>
</feature>
<feature type="transmembrane region" description="Helical" evidence="1">
    <location>
        <begin position="40"/>
        <end position="60"/>
    </location>
</feature>
<feature type="transmembrane region" description="Helical" evidence="1">
    <location>
        <begin position="66"/>
        <end position="86"/>
    </location>
</feature>
<sequence>MSFVTENPWLMVLTIFIINVCYVTFLTMRTILTLKGYRYIAASVSFLEVLVYIVGLGLVMSNLDHIQNIIAYAFGFSIGIIVGMKIEEKLALGYTVVNVTSAEYELDLPNELRNLGYGVTHYAAFGRDGSRMVMQILTPRKYERKLMDTIKNLDPKAFIIAYEPRNIHGGFWTKGIRRRKLKDYEPEELESVVEHEIQSK</sequence>
<proteinExistence type="inferred from homology"/>
<organism>
    <name type="scientific">Staphylococcus aureus (strain JH9)</name>
    <dbReference type="NCBI Taxonomy" id="359786"/>
    <lineage>
        <taxon>Bacteria</taxon>
        <taxon>Bacillati</taxon>
        <taxon>Bacillota</taxon>
        <taxon>Bacilli</taxon>
        <taxon>Bacillales</taxon>
        <taxon>Staphylococcaceae</taxon>
        <taxon>Staphylococcus</taxon>
    </lineage>
</organism>
<accession>A5IU79</accession>
<name>Y1967_STAA9</name>
<protein>
    <recommendedName>
        <fullName evidence="1">UPF0316 protein SaurJH9_1967</fullName>
    </recommendedName>
</protein>
<evidence type="ECO:0000255" key="1">
    <source>
        <dbReference type="HAMAP-Rule" id="MF_01515"/>
    </source>
</evidence>
<keyword id="KW-1003">Cell membrane</keyword>
<keyword id="KW-0472">Membrane</keyword>
<keyword id="KW-0812">Transmembrane</keyword>
<keyword id="KW-1133">Transmembrane helix</keyword>
<comment type="subcellular location">
    <subcellularLocation>
        <location evidence="1">Cell membrane</location>
        <topology evidence="1">Multi-pass membrane protein</topology>
    </subcellularLocation>
</comment>
<comment type="similarity">
    <text evidence="1">Belongs to the UPF0316 family.</text>
</comment>
<reference key="1">
    <citation type="submission" date="2007-05" db="EMBL/GenBank/DDBJ databases">
        <title>Complete sequence of chromosome of Staphylococcus aureus subsp. aureus JH9.</title>
        <authorList>
            <consortium name="US DOE Joint Genome Institute"/>
            <person name="Copeland A."/>
            <person name="Lucas S."/>
            <person name="Lapidus A."/>
            <person name="Barry K."/>
            <person name="Detter J.C."/>
            <person name="Glavina del Rio T."/>
            <person name="Hammon N."/>
            <person name="Israni S."/>
            <person name="Pitluck S."/>
            <person name="Chain P."/>
            <person name="Malfatti S."/>
            <person name="Shin M."/>
            <person name="Vergez L."/>
            <person name="Schmutz J."/>
            <person name="Larimer F."/>
            <person name="Land M."/>
            <person name="Hauser L."/>
            <person name="Kyrpides N."/>
            <person name="Kim E."/>
            <person name="Tomasz A."/>
            <person name="Richardson P."/>
        </authorList>
    </citation>
    <scope>NUCLEOTIDE SEQUENCE [LARGE SCALE GENOMIC DNA]</scope>
    <source>
        <strain>JH9</strain>
    </source>
</reference>